<comment type="function">
    <text evidence="1">Acts as a negative regulator of osteoclast differentiation in basal and inflammatory conditions by regulating TNFSF11-induced Ca (2+) fluxes, thereby controlling the induction of NFATC1.</text>
</comment>
<comment type="subunit">
    <text evidence="1">Interacts with STIM1.</text>
</comment>
<comment type="subcellular location">
    <subcellularLocation>
        <location evidence="1">Endoplasmic reticulum membrane</location>
        <topology evidence="2">Multi-pass membrane protein</topology>
    </subcellularLocation>
</comment>
<comment type="alternative products">
    <event type="alternative splicing"/>
    <isoform>
        <id>Q8NBL3-1</id>
        <name>1</name>
        <sequence type="displayed"/>
    </isoform>
    <isoform>
        <id>Q8NBL3-2</id>
        <name>2</name>
        <sequence type="described" ref="VSP_025428 VSP_025429"/>
    </isoform>
</comment>
<comment type="similarity">
    <text evidence="6">Belongs to the TMEM178 family.</text>
</comment>
<feature type="signal peptide" evidence="2">
    <location>
        <begin position="1"/>
        <end position="25"/>
    </location>
</feature>
<feature type="chain" id="PRO_0000287280" description="Transmembrane protein 178A">
    <location>
        <begin position="26"/>
        <end position="297"/>
    </location>
</feature>
<feature type="topological domain" description="Extracellular" evidence="2">
    <location>
        <begin position="26"/>
        <end position="179"/>
    </location>
</feature>
<feature type="transmembrane region" description="Helical" evidence="2">
    <location>
        <begin position="180"/>
        <end position="200"/>
    </location>
</feature>
<feature type="topological domain" description="Cytoplasmic" evidence="2">
    <location>
        <begin position="201"/>
        <end position="208"/>
    </location>
</feature>
<feature type="transmembrane region" description="Helical" evidence="2">
    <location>
        <begin position="209"/>
        <end position="229"/>
    </location>
</feature>
<feature type="topological domain" description="Extracellular" evidence="2">
    <location>
        <begin position="230"/>
        <end position="257"/>
    </location>
</feature>
<feature type="transmembrane region" description="Helical" evidence="2">
    <location>
        <begin position="258"/>
        <end position="278"/>
    </location>
</feature>
<feature type="topological domain" description="Cytoplasmic" evidence="2">
    <location>
        <begin position="279"/>
        <end position="297"/>
    </location>
</feature>
<feature type="region of interest" description="Disordered" evidence="3">
    <location>
        <begin position="41"/>
        <end position="84"/>
    </location>
</feature>
<feature type="compositionally biased region" description="Basic and acidic residues" evidence="3">
    <location>
        <begin position="41"/>
        <end position="57"/>
    </location>
</feature>
<feature type="compositionally biased region" description="Low complexity" evidence="3">
    <location>
        <begin position="68"/>
        <end position="79"/>
    </location>
</feature>
<feature type="glycosylation site" description="N-linked (GlcNAc...) asparagine" evidence="2">
    <location>
        <position position="158"/>
    </location>
</feature>
<feature type="splice variant" id="VSP_025428" description="In isoform 2." evidence="5">
    <original>PLRDSPPLGRRLLPGGPGRADPESWRSLLGLGGLDAECGRPLFATY</original>
    <variation>LGPLEEVLLPGHRPGHRHPHPERYCAAMHGHQVPLFSAHPLAKHSF</variation>
    <location>
        <begin position="66"/>
        <end position="111"/>
    </location>
</feature>
<feature type="splice variant" id="VSP_025429" description="In isoform 2." evidence="5">
    <location>
        <begin position="112"/>
        <end position="297"/>
    </location>
</feature>
<feature type="sequence variant" id="VAR_032296" description="In dbSNP:rs17852679." evidence="4">
    <original>L</original>
    <variation>V</variation>
    <location>
        <position position="107"/>
    </location>
</feature>
<protein>
    <recommendedName>
        <fullName>Transmembrane protein 178A</fullName>
    </recommendedName>
</protein>
<evidence type="ECO:0000250" key="1">
    <source>
        <dbReference type="UniProtKB" id="Q9CZ16"/>
    </source>
</evidence>
<evidence type="ECO:0000255" key="2"/>
<evidence type="ECO:0000256" key="3">
    <source>
        <dbReference type="SAM" id="MobiDB-lite"/>
    </source>
</evidence>
<evidence type="ECO:0000269" key="4">
    <source>
    </source>
</evidence>
<evidence type="ECO:0000303" key="5">
    <source>
    </source>
</evidence>
<evidence type="ECO:0000305" key="6"/>
<keyword id="KW-0025">Alternative splicing</keyword>
<keyword id="KW-0256">Endoplasmic reticulum</keyword>
<keyword id="KW-0325">Glycoprotein</keyword>
<keyword id="KW-0472">Membrane</keyword>
<keyword id="KW-1267">Proteomics identification</keyword>
<keyword id="KW-1185">Reference proteome</keyword>
<keyword id="KW-0732">Signal</keyword>
<keyword id="KW-0812">Transmembrane</keyword>
<keyword id="KW-1133">Transmembrane helix</keyword>
<sequence length="297" mass="33019">MEPRALVTALSLGLSLCSLGLLVTAIFTDHWYETDPRRHKESCERSRAGADPPDQKNRLMPLSHLPLRDSPPLGRRLLPGGPGRADPESWRSLLGLGGLDAECGRPLFATYSGLWRKCYFLGIDRDIDTLILKGIAQRCTAIKYHFSQPIRLRNIPFNLTKTIQQDEWHLLHLRRITAGFLGMAVAVLLCGCIVATVSFFWEESLTQHVAGLLFLMTGIFCTISLCTYAASISYDLNRLPKLIYSLPADVEHGYSWSIFCAWCSLGFIVAAGGLCIAYPFISRTKIAQLKSGRDSTV</sequence>
<proteinExistence type="evidence at protein level"/>
<gene>
    <name type="primary">TMEM178A</name>
    <name type="synonym">TMEM178</name>
    <name type="ORF">PSEC0131</name>
    <name type="ORF">UNQ5926/PRO19820</name>
</gene>
<reference key="1">
    <citation type="journal article" date="2003" name="Genome Res.">
        <title>The secreted protein discovery initiative (SPDI), a large-scale effort to identify novel human secreted and transmembrane proteins: a bioinformatics assessment.</title>
        <authorList>
            <person name="Clark H.F."/>
            <person name="Gurney A.L."/>
            <person name="Abaya E."/>
            <person name="Baker K."/>
            <person name="Baldwin D.T."/>
            <person name="Brush J."/>
            <person name="Chen J."/>
            <person name="Chow B."/>
            <person name="Chui C."/>
            <person name="Crowley C."/>
            <person name="Currell B."/>
            <person name="Deuel B."/>
            <person name="Dowd P."/>
            <person name="Eaton D."/>
            <person name="Foster J.S."/>
            <person name="Grimaldi C."/>
            <person name="Gu Q."/>
            <person name="Hass P.E."/>
            <person name="Heldens S."/>
            <person name="Huang A."/>
            <person name="Kim H.S."/>
            <person name="Klimowski L."/>
            <person name="Jin Y."/>
            <person name="Johnson S."/>
            <person name="Lee J."/>
            <person name="Lewis L."/>
            <person name="Liao D."/>
            <person name="Mark M.R."/>
            <person name="Robbie E."/>
            <person name="Sanchez C."/>
            <person name="Schoenfeld J."/>
            <person name="Seshagiri S."/>
            <person name="Simmons L."/>
            <person name="Singh J."/>
            <person name="Smith V."/>
            <person name="Stinson J."/>
            <person name="Vagts A."/>
            <person name="Vandlen R.L."/>
            <person name="Watanabe C."/>
            <person name="Wieand D."/>
            <person name="Woods K."/>
            <person name="Xie M.-H."/>
            <person name="Yansura D.G."/>
            <person name="Yi S."/>
            <person name="Yu G."/>
            <person name="Yuan J."/>
            <person name="Zhang M."/>
            <person name="Zhang Z."/>
            <person name="Goddard A.D."/>
            <person name="Wood W.I."/>
            <person name="Godowski P.J."/>
            <person name="Gray A.M."/>
        </authorList>
    </citation>
    <scope>NUCLEOTIDE SEQUENCE [LARGE SCALE MRNA] (ISOFORM 2)</scope>
</reference>
<reference key="2">
    <citation type="journal article" date="2005" name="DNA Res.">
        <title>Signal sequence and keyword trap in silico for selection of full-length human cDNAs encoding secretion or membrane proteins from oligo-capped cDNA libraries.</title>
        <authorList>
            <person name="Otsuki T."/>
            <person name="Ota T."/>
            <person name="Nishikawa T."/>
            <person name="Hayashi K."/>
            <person name="Suzuki Y."/>
            <person name="Yamamoto J."/>
            <person name="Wakamatsu A."/>
            <person name="Kimura K."/>
            <person name="Sakamoto K."/>
            <person name="Hatano N."/>
            <person name="Kawai Y."/>
            <person name="Ishii S."/>
            <person name="Saito K."/>
            <person name="Kojima S."/>
            <person name="Sugiyama T."/>
            <person name="Ono T."/>
            <person name="Okano K."/>
            <person name="Yoshikawa Y."/>
            <person name="Aotsuka S."/>
            <person name="Sasaki N."/>
            <person name="Hattori A."/>
            <person name="Okumura K."/>
            <person name="Nagai K."/>
            <person name="Sugano S."/>
            <person name="Isogai T."/>
        </authorList>
    </citation>
    <scope>NUCLEOTIDE SEQUENCE [LARGE SCALE MRNA] (ISOFORM 1)</scope>
    <source>
        <tissue>Placenta</tissue>
    </source>
</reference>
<reference key="3">
    <citation type="journal article" date="2005" name="Nature">
        <title>Generation and annotation of the DNA sequences of human chromosomes 2 and 4.</title>
        <authorList>
            <person name="Hillier L.W."/>
            <person name="Graves T.A."/>
            <person name="Fulton R.S."/>
            <person name="Fulton L.A."/>
            <person name="Pepin K.H."/>
            <person name="Minx P."/>
            <person name="Wagner-McPherson C."/>
            <person name="Layman D."/>
            <person name="Wylie K."/>
            <person name="Sekhon M."/>
            <person name="Becker M.C."/>
            <person name="Fewell G.A."/>
            <person name="Delehaunty K.D."/>
            <person name="Miner T.L."/>
            <person name="Nash W.E."/>
            <person name="Kremitzki C."/>
            <person name="Oddy L."/>
            <person name="Du H."/>
            <person name="Sun H."/>
            <person name="Bradshaw-Cordum H."/>
            <person name="Ali J."/>
            <person name="Carter J."/>
            <person name="Cordes M."/>
            <person name="Harris A."/>
            <person name="Isak A."/>
            <person name="van Brunt A."/>
            <person name="Nguyen C."/>
            <person name="Du F."/>
            <person name="Courtney L."/>
            <person name="Kalicki J."/>
            <person name="Ozersky P."/>
            <person name="Abbott S."/>
            <person name="Armstrong J."/>
            <person name="Belter E.A."/>
            <person name="Caruso L."/>
            <person name="Cedroni M."/>
            <person name="Cotton M."/>
            <person name="Davidson T."/>
            <person name="Desai A."/>
            <person name="Elliott G."/>
            <person name="Erb T."/>
            <person name="Fronick C."/>
            <person name="Gaige T."/>
            <person name="Haakenson W."/>
            <person name="Haglund K."/>
            <person name="Holmes A."/>
            <person name="Harkins R."/>
            <person name="Kim K."/>
            <person name="Kruchowski S.S."/>
            <person name="Strong C.M."/>
            <person name="Grewal N."/>
            <person name="Goyea E."/>
            <person name="Hou S."/>
            <person name="Levy A."/>
            <person name="Martinka S."/>
            <person name="Mead K."/>
            <person name="McLellan M.D."/>
            <person name="Meyer R."/>
            <person name="Randall-Maher J."/>
            <person name="Tomlinson C."/>
            <person name="Dauphin-Kohlberg S."/>
            <person name="Kozlowicz-Reilly A."/>
            <person name="Shah N."/>
            <person name="Swearengen-Shahid S."/>
            <person name="Snider J."/>
            <person name="Strong J.T."/>
            <person name="Thompson J."/>
            <person name="Yoakum M."/>
            <person name="Leonard S."/>
            <person name="Pearman C."/>
            <person name="Trani L."/>
            <person name="Radionenko M."/>
            <person name="Waligorski J.E."/>
            <person name="Wang C."/>
            <person name="Rock S.M."/>
            <person name="Tin-Wollam A.-M."/>
            <person name="Maupin R."/>
            <person name="Latreille P."/>
            <person name="Wendl M.C."/>
            <person name="Yang S.-P."/>
            <person name="Pohl C."/>
            <person name="Wallis J.W."/>
            <person name="Spieth J."/>
            <person name="Bieri T.A."/>
            <person name="Berkowicz N."/>
            <person name="Nelson J.O."/>
            <person name="Osborne J."/>
            <person name="Ding L."/>
            <person name="Meyer R."/>
            <person name="Sabo A."/>
            <person name="Shotland Y."/>
            <person name="Sinha P."/>
            <person name="Wohldmann P.E."/>
            <person name="Cook L.L."/>
            <person name="Hickenbotham M.T."/>
            <person name="Eldred J."/>
            <person name="Williams D."/>
            <person name="Jones T.A."/>
            <person name="She X."/>
            <person name="Ciccarelli F.D."/>
            <person name="Izaurralde E."/>
            <person name="Taylor J."/>
            <person name="Schmutz J."/>
            <person name="Myers R.M."/>
            <person name="Cox D.R."/>
            <person name="Huang X."/>
            <person name="McPherson J.D."/>
            <person name="Mardis E.R."/>
            <person name="Clifton S.W."/>
            <person name="Warren W.C."/>
            <person name="Chinwalla A.T."/>
            <person name="Eddy S.R."/>
            <person name="Marra M.A."/>
            <person name="Ovcharenko I."/>
            <person name="Furey T.S."/>
            <person name="Miller W."/>
            <person name="Eichler E.E."/>
            <person name="Bork P."/>
            <person name="Suyama M."/>
            <person name="Torrents D."/>
            <person name="Waterston R.H."/>
            <person name="Wilson R.K."/>
        </authorList>
    </citation>
    <scope>NUCLEOTIDE SEQUENCE [LARGE SCALE GENOMIC DNA]</scope>
</reference>
<reference key="4">
    <citation type="journal article" date="2004" name="Genome Res.">
        <title>The status, quality, and expansion of the NIH full-length cDNA project: the Mammalian Gene Collection (MGC).</title>
        <authorList>
            <consortium name="The MGC Project Team"/>
        </authorList>
    </citation>
    <scope>NUCLEOTIDE SEQUENCE [LARGE SCALE MRNA] (ISOFORM 1)</scope>
    <scope>VARIANT VAL-107</scope>
    <source>
        <tissue>Brain</tissue>
    </source>
</reference>
<name>T178A_HUMAN</name>
<dbReference type="EMBL" id="AY358773">
    <property type="protein sequence ID" value="AAQ89133.1"/>
    <property type="molecule type" value="mRNA"/>
</dbReference>
<dbReference type="EMBL" id="AK075440">
    <property type="protein sequence ID" value="BAC11622.1"/>
    <property type="molecule type" value="mRNA"/>
</dbReference>
<dbReference type="EMBL" id="AC007246">
    <property type="protein sequence ID" value="AAX93064.1"/>
    <property type="molecule type" value="Genomic_DNA"/>
</dbReference>
<dbReference type="EMBL" id="BC029530">
    <property type="protein sequence ID" value="AAH29530.1"/>
    <property type="molecule type" value="mRNA"/>
</dbReference>
<dbReference type="CCDS" id="CCDS1804.1">
    <molecule id="Q8NBL3-1"/>
</dbReference>
<dbReference type="RefSeq" id="NP_001161431.1">
    <property type="nucleotide sequence ID" value="NM_001167959.1"/>
</dbReference>
<dbReference type="RefSeq" id="NP_689603.2">
    <molecule id="Q8NBL3-1"/>
    <property type="nucleotide sequence ID" value="NM_152390.3"/>
</dbReference>
<dbReference type="BioGRID" id="126251">
    <property type="interactions" value="16"/>
</dbReference>
<dbReference type="FunCoup" id="Q8NBL3">
    <property type="interactions" value="125"/>
</dbReference>
<dbReference type="IntAct" id="Q8NBL3">
    <property type="interactions" value="3"/>
</dbReference>
<dbReference type="STRING" id="9606.ENSP00000281961"/>
<dbReference type="TCDB" id="8.A.16.2.8">
    <property type="family name" value="the ca(+) channel auxiliary subunit Gama1-Gama8 (ccaGama) family"/>
</dbReference>
<dbReference type="GlyCosmos" id="Q8NBL3">
    <property type="glycosylation" value="1 site, No reported glycans"/>
</dbReference>
<dbReference type="GlyGen" id="Q8NBL3">
    <property type="glycosylation" value="1 site"/>
</dbReference>
<dbReference type="PhosphoSitePlus" id="Q8NBL3"/>
<dbReference type="BioMuta" id="TMEM178A"/>
<dbReference type="DMDM" id="74723755"/>
<dbReference type="MassIVE" id="Q8NBL3"/>
<dbReference type="PaxDb" id="9606-ENSP00000281961"/>
<dbReference type="PeptideAtlas" id="Q8NBL3"/>
<dbReference type="ProteomicsDB" id="72790">
    <molecule id="Q8NBL3-1"/>
</dbReference>
<dbReference type="TopDownProteomics" id="Q8NBL3-1">
    <molecule id="Q8NBL3-1"/>
</dbReference>
<dbReference type="Antibodypedia" id="14741">
    <property type="antibodies" value="81 antibodies from 16 providers"/>
</dbReference>
<dbReference type="DNASU" id="130733"/>
<dbReference type="Ensembl" id="ENST00000281961.3">
    <molecule id="Q8NBL3-1"/>
    <property type="protein sequence ID" value="ENSP00000281961.2"/>
    <property type="gene ID" value="ENSG00000152154.12"/>
</dbReference>
<dbReference type="GeneID" id="130733"/>
<dbReference type="KEGG" id="hsa:130733"/>
<dbReference type="MANE-Select" id="ENST00000281961.3">
    <property type="protein sequence ID" value="ENSP00000281961.2"/>
    <property type="RefSeq nucleotide sequence ID" value="NM_152390.3"/>
    <property type="RefSeq protein sequence ID" value="NP_689603.2"/>
</dbReference>
<dbReference type="UCSC" id="uc002rrt.5">
    <molecule id="Q8NBL3-1"/>
    <property type="organism name" value="human"/>
</dbReference>
<dbReference type="AGR" id="HGNC:28517"/>
<dbReference type="CTD" id="130733"/>
<dbReference type="DisGeNET" id="130733"/>
<dbReference type="GeneCards" id="TMEM178A"/>
<dbReference type="HGNC" id="HGNC:28517">
    <property type="gene designation" value="TMEM178A"/>
</dbReference>
<dbReference type="HPA" id="ENSG00000152154">
    <property type="expression patterns" value="Tissue enriched (brain)"/>
</dbReference>
<dbReference type="neXtProt" id="NX_Q8NBL3"/>
<dbReference type="OpenTargets" id="ENSG00000152154"/>
<dbReference type="PharmGKB" id="PA162405994"/>
<dbReference type="VEuPathDB" id="HostDB:ENSG00000152154"/>
<dbReference type="eggNOG" id="ENOG502R2WV">
    <property type="taxonomic scope" value="Eukaryota"/>
</dbReference>
<dbReference type="GeneTree" id="ENSGT00390000015299"/>
<dbReference type="HOGENOM" id="CLU_961492_0_0_1"/>
<dbReference type="InParanoid" id="Q8NBL3"/>
<dbReference type="OMA" id="ATYAGLW"/>
<dbReference type="OrthoDB" id="9941453at2759"/>
<dbReference type="PAN-GO" id="Q8NBL3">
    <property type="GO annotations" value="3 GO annotations based on evolutionary models"/>
</dbReference>
<dbReference type="PhylomeDB" id="Q8NBL3"/>
<dbReference type="TreeFam" id="TF331307"/>
<dbReference type="PathwayCommons" id="Q8NBL3"/>
<dbReference type="SignaLink" id="Q8NBL3"/>
<dbReference type="BioGRID-ORCS" id="130733">
    <property type="hits" value="14 hits in 1151 CRISPR screens"/>
</dbReference>
<dbReference type="GenomeRNAi" id="130733"/>
<dbReference type="Pharos" id="Q8NBL3">
    <property type="development level" value="Tdark"/>
</dbReference>
<dbReference type="PRO" id="PR:Q8NBL3"/>
<dbReference type="Proteomes" id="UP000005640">
    <property type="component" value="Chromosome 2"/>
</dbReference>
<dbReference type="RNAct" id="Q8NBL3">
    <property type="molecule type" value="protein"/>
</dbReference>
<dbReference type="Bgee" id="ENSG00000152154">
    <property type="expression patterns" value="Expressed in cerebellar hemisphere and 140 other cell types or tissues"/>
</dbReference>
<dbReference type="GO" id="GO:0005789">
    <property type="term" value="C:endoplasmic reticulum membrane"/>
    <property type="evidence" value="ECO:0000250"/>
    <property type="project" value="UniProtKB"/>
</dbReference>
<dbReference type="GO" id="GO:0045671">
    <property type="term" value="P:negative regulation of osteoclast differentiation"/>
    <property type="evidence" value="ECO:0000250"/>
    <property type="project" value="UniProtKB"/>
</dbReference>
<dbReference type="GO" id="GO:0051480">
    <property type="term" value="P:regulation of cytosolic calcium ion concentration"/>
    <property type="evidence" value="ECO:0000250"/>
    <property type="project" value="UniProtKB"/>
</dbReference>
<dbReference type="FunFam" id="1.20.140.150:FF:000024">
    <property type="entry name" value="Transmembrane protein 178A"/>
    <property type="match status" value="1"/>
</dbReference>
<dbReference type="Gene3D" id="1.20.140.150">
    <property type="match status" value="1"/>
</dbReference>
<dbReference type="InterPro" id="IPR004031">
    <property type="entry name" value="PMP22/EMP/MP20/Claudin"/>
</dbReference>
<dbReference type="InterPro" id="IPR039625">
    <property type="entry name" value="T178A/B"/>
</dbReference>
<dbReference type="PANTHER" id="PTHR32005:SF4">
    <property type="entry name" value="TRANSMEMBRANE PROTEIN 178A"/>
    <property type="match status" value="1"/>
</dbReference>
<dbReference type="PANTHER" id="PTHR32005">
    <property type="entry name" value="TRANSMEMBRANE PROTEIN 178B-RELATED"/>
    <property type="match status" value="1"/>
</dbReference>
<dbReference type="Pfam" id="PF13903">
    <property type="entry name" value="Claudin_2"/>
    <property type="match status" value="1"/>
</dbReference>
<accession>Q8NBL3</accession>
<accession>Q6UWI6</accession>
<accession>Q8N6N4</accession>
<organism>
    <name type="scientific">Homo sapiens</name>
    <name type="common">Human</name>
    <dbReference type="NCBI Taxonomy" id="9606"/>
    <lineage>
        <taxon>Eukaryota</taxon>
        <taxon>Metazoa</taxon>
        <taxon>Chordata</taxon>
        <taxon>Craniata</taxon>
        <taxon>Vertebrata</taxon>
        <taxon>Euteleostomi</taxon>
        <taxon>Mammalia</taxon>
        <taxon>Eutheria</taxon>
        <taxon>Euarchontoglires</taxon>
        <taxon>Primates</taxon>
        <taxon>Haplorrhini</taxon>
        <taxon>Catarrhini</taxon>
        <taxon>Hominidae</taxon>
        <taxon>Homo</taxon>
    </lineage>
</organism>